<organism>
    <name type="scientific">Zymomonas mobilis subsp. mobilis (strain ATCC 31821 / ZM4 / CP4)</name>
    <dbReference type="NCBI Taxonomy" id="264203"/>
    <lineage>
        <taxon>Bacteria</taxon>
        <taxon>Pseudomonadati</taxon>
        <taxon>Pseudomonadota</taxon>
        <taxon>Alphaproteobacteria</taxon>
        <taxon>Sphingomonadales</taxon>
        <taxon>Zymomonadaceae</taxon>
        <taxon>Zymomonas</taxon>
    </lineage>
</organism>
<comment type="function">
    <text evidence="1">Removes the formyl group from the N-terminal Met of newly synthesized proteins. Requires at least a dipeptide for an efficient rate of reaction. N-terminal L-methionine is a prerequisite for activity but the enzyme has broad specificity at other positions.</text>
</comment>
<comment type="catalytic activity">
    <reaction evidence="1">
        <text>N-terminal N-formyl-L-methionyl-[peptide] + H2O = N-terminal L-methionyl-[peptide] + formate</text>
        <dbReference type="Rhea" id="RHEA:24420"/>
        <dbReference type="Rhea" id="RHEA-COMP:10639"/>
        <dbReference type="Rhea" id="RHEA-COMP:10640"/>
        <dbReference type="ChEBI" id="CHEBI:15377"/>
        <dbReference type="ChEBI" id="CHEBI:15740"/>
        <dbReference type="ChEBI" id="CHEBI:49298"/>
        <dbReference type="ChEBI" id="CHEBI:64731"/>
        <dbReference type="EC" id="3.5.1.88"/>
    </reaction>
</comment>
<comment type="cofactor">
    <cofactor evidence="1">
        <name>Fe(2+)</name>
        <dbReference type="ChEBI" id="CHEBI:29033"/>
    </cofactor>
    <text evidence="1">Binds 1 Fe(2+) ion.</text>
</comment>
<comment type="similarity">
    <text evidence="1">Belongs to the polypeptide deformylase family.</text>
</comment>
<evidence type="ECO:0000255" key="1">
    <source>
        <dbReference type="HAMAP-Rule" id="MF_00163"/>
    </source>
</evidence>
<dbReference type="EC" id="3.5.1.88" evidence="1"/>
<dbReference type="EMBL" id="AF213822">
    <property type="protein sequence ID" value="AAF23793.1"/>
    <property type="molecule type" value="Genomic_DNA"/>
</dbReference>
<dbReference type="EMBL" id="AE008692">
    <property type="protein sequence ID" value="AAV89437.1"/>
    <property type="molecule type" value="Genomic_DNA"/>
</dbReference>
<dbReference type="RefSeq" id="WP_011240685.1">
    <property type="nucleotide sequence ID" value="NZ_CP035711.1"/>
</dbReference>
<dbReference type="SMR" id="Q9REQ2"/>
<dbReference type="STRING" id="264203.ZMO0813"/>
<dbReference type="GeneID" id="79904027"/>
<dbReference type="KEGG" id="zmo:ZMO0813"/>
<dbReference type="eggNOG" id="COG0242">
    <property type="taxonomic scope" value="Bacteria"/>
</dbReference>
<dbReference type="HOGENOM" id="CLU_061901_2_0_5"/>
<dbReference type="Proteomes" id="UP000001173">
    <property type="component" value="Chromosome"/>
</dbReference>
<dbReference type="GO" id="GO:0046872">
    <property type="term" value="F:metal ion binding"/>
    <property type="evidence" value="ECO:0007669"/>
    <property type="project" value="UniProtKB-KW"/>
</dbReference>
<dbReference type="GO" id="GO:0042586">
    <property type="term" value="F:peptide deformylase activity"/>
    <property type="evidence" value="ECO:0007669"/>
    <property type="project" value="UniProtKB-UniRule"/>
</dbReference>
<dbReference type="GO" id="GO:0006412">
    <property type="term" value="P:translation"/>
    <property type="evidence" value="ECO:0007669"/>
    <property type="project" value="UniProtKB-UniRule"/>
</dbReference>
<dbReference type="CDD" id="cd00487">
    <property type="entry name" value="Pep_deformylase"/>
    <property type="match status" value="1"/>
</dbReference>
<dbReference type="Gene3D" id="3.90.45.10">
    <property type="entry name" value="Peptide deformylase"/>
    <property type="match status" value="1"/>
</dbReference>
<dbReference type="HAMAP" id="MF_00163">
    <property type="entry name" value="Pep_deformylase"/>
    <property type="match status" value="1"/>
</dbReference>
<dbReference type="InterPro" id="IPR023635">
    <property type="entry name" value="Peptide_deformylase"/>
</dbReference>
<dbReference type="InterPro" id="IPR036821">
    <property type="entry name" value="Peptide_deformylase_sf"/>
</dbReference>
<dbReference type="NCBIfam" id="TIGR00079">
    <property type="entry name" value="pept_deformyl"/>
    <property type="match status" value="1"/>
</dbReference>
<dbReference type="NCBIfam" id="NF001159">
    <property type="entry name" value="PRK00150.1-3"/>
    <property type="match status" value="1"/>
</dbReference>
<dbReference type="PANTHER" id="PTHR10458">
    <property type="entry name" value="PEPTIDE DEFORMYLASE"/>
    <property type="match status" value="1"/>
</dbReference>
<dbReference type="PANTHER" id="PTHR10458:SF22">
    <property type="entry name" value="PEPTIDE DEFORMYLASE"/>
    <property type="match status" value="1"/>
</dbReference>
<dbReference type="Pfam" id="PF01327">
    <property type="entry name" value="Pep_deformylase"/>
    <property type="match status" value="1"/>
</dbReference>
<dbReference type="PIRSF" id="PIRSF004749">
    <property type="entry name" value="Pep_def"/>
    <property type="match status" value="1"/>
</dbReference>
<dbReference type="PRINTS" id="PR01576">
    <property type="entry name" value="PDEFORMYLASE"/>
</dbReference>
<dbReference type="SUPFAM" id="SSF56420">
    <property type="entry name" value="Peptide deformylase"/>
    <property type="match status" value="1"/>
</dbReference>
<gene>
    <name evidence="1" type="primary">def</name>
    <name type="ordered locus">ZMO0813</name>
</gene>
<accession>Q9REQ2</accession>
<accession>Q5NPC3</accession>
<reference key="1">
    <citation type="submission" date="1999-12" db="EMBL/GenBank/DDBJ databases">
        <authorList>
            <person name="Um H.W."/>
            <person name="Kang H.S."/>
        </authorList>
    </citation>
    <scope>NUCLEOTIDE SEQUENCE [GENOMIC DNA]</scope>
    <source>
        <strain>ATCC 31821 / ZM4 / CP4</strain>
    </source>
</reference>
<reference key="2">
    <citation type="journal article" date="2005" name="Nat. Biotechnol.">
        <title>The genome sequence of the ethanologenic bacterium Zymomonas mobilis ZM4.</title>
        <authorList>
            <person name="Seo J.-S."/>
            <person name="Chong H."/>
            <person name="Park H.S."/>
            <person name="Yoon K.-O."/>
            <person name="Jung C."/>
            <person name="Kim J.J."/>
            <person name="Hong J.H."/>
            <person name="Kim H."/>
            <person name="Kim J.-H."/>
            <person name="Kil J.-I."/>
            <person name="Park C.J."/>
            <person name="Oh H.-M."/>
            <person name="Lee J.-S."/>
            <person name="Jin S.-J."/>
            <person name="Um H.-W."/>
            <person name="Lee H.-J."/>
            <person name="Oh S.-J."/>
            <person name="Kim J.Y."/>
            <person name="Kang H.L."/>
            <person name="Lee S.Y."/>
            <person name="Lee K.J."/>
            <person name="Kang H.S."/>
        </authorList>
    </citation>
    <scope>NUCLEOTIDE SEQUENCE [LARGE SCALE GENOMIC DNA]</scope>
    <source>
        <strain>ATCC 31821 / ZM4 / CP4</strain>
    </source>
</reference>
<name>DEF_ZYMMO</name>
<protein>
    <recommendedName>
        <fullName evidence="1">Peptide deformylase</fullName>
        <shortName evidence="1">PDF</shortName>
        <ecNumber evidence="1">3.5.1.88</ecNumber>
    </recommendedName>
    <alternativeName>
        <fullName evidence="1">Polypeptide deformylase</fullName>
    </alternativeName>
</protein>
<proteinExistence type="inferred from homology"/>
<keyword id="KW-0378">Hydrolase</keyword>
<keyword id="KW-0408">Iron</keyword>
<keyword id="KW-0479">Metal-binding</keyword>
<keyword id="KW-0648">Protein biosynthesis</keyword>
<keyword id="KW-1185">Reference proteome</keyword>
<sequence length="177" mass="20424">MALLPILEVPDPRLREKSTVVEVFDDNLQRLIDDMFETMYKAPGIGLAAIQVGVAKRLLVIDLQQPEEGGEAKRNPMVFINPELTPEGEEKRLYNEGCLSVPDQYAEVRRPSVINAKWQDRDGNFHEERIEGLLATCLQHEMDHLEGILFIDHLSRLKRGMLMKKLLKERKLREDSY</sequence>
<feature type="chain" id="PRO_0000301131" description="Peptide deformylase">
    <location>
        <begin position="1"/>
        <end position="177"/>
    </location>
</feature>
<feature type="active site" evidence="1">
    <location>
        <position position="141"/>
    </location>
</feature>
<feature type="binding site" evidence="1">
    <location>
        <position position="98"/>
    </location>
    <ligand>
        <name>Fe cation</name>
        <dbReference type="ChEBI" id="CHEBI:24875"/>
    </ligand>
</feature>
<feature type="binding site" evidence="1">
    <location>
        <position position="140"/>
    </location>
    <ligand>
        <name>Fe cation</name>
        <dbReference type="ChEBI" id="CHEBI:24875"/>
    </ligand>
</feature>
<feature type="binding site" evidence="1">
    <location>
        <position position="144"/>
    </location>
    <ligand>
        <name>Fe cation</name>
        <dbReference type="ChEBI" id="CHEBI:24875"/>
    </ligand>
</feature>